<proteinExistence type="inferred from homology"/>
<keyword id="KW-0963">Cytoplasm</keyword>
<keyword id="KW-1185">Reference proteome</keyword>
<keyword id="KW-0732">Signal</keyword>
<comment type="subcellular location">
    <subcellularLocation>
        <location evidence="3">Cytoplasm</location>
    </subcellularLocation>
</comment>
<comment type="similarity">
    <text evidence="4">Belongs to the but2 family.</text>
</comment>
<dbReference type="EMBL" id="CU329670">
    <property type="protein sequence ID" value="CAA15830.1"/>
    <property type="molecule type" value="Genomic_DNA"/>
</dbReference>
<dbReference type="PIR" id="T38444">
    <property type="entry name" value="T38444"/>
</dbReference>
<dbReference type="RefSeq" id="NP_594617.1">
    <property type="nucleotide sequence ID" value="NM_001020045.2"/>
</dbReference>
<dbReference type="BioGRID" id="278112">
    <property type="interactions" value="10"/>
</dbReference>
<dbReference type="STRING" id="284812.O42665"/>
<dbReference type="iPTMnet" id="O42665"/>
<dbReference type="PaxDb" id="4896-SPAC27D7.11c.1"/>
<dbReference type="EnsemblFungi" id="SPAC27D7.11c.1">
    <property type="protein sequence ID" value="SPAC27D7.11c.1:pep"/>
    <property type="gene ID" value="SPAC27D7.11c"/>
</dbReference>
<dbReference type="KEGG" id="spo:2541615"/>
<dbReference type="PomBase" id="SPAC27D7.11c"/>
<dbReference type="VEuPathDB" id="FungiDB:SPAC27D7.11c"/>
<dbReference type="eggNOG" id="ENOG502RYJ6">
    <property type="taxonomic scope" value="Eukaryota"/>
</dbReference>
<dbReference type="HOGENOM" id="CLU_059610_0_0_1"/>
<dbReference type="InParanoid" id="O42665"/>
<dbReference type="OMA" id="HLHGFYV"/>
<dbReference type="PRO" id="PR:O42665"/>
<dbReference type="Proteomes" id="UP000002485">
    <property type="component" value="Chromosome I"/>
</dbReference>
<dbReference type="GO" id="GO:0005737">
    <property type="term" value="C:cytoplasm"/>
    <property type="evidence" value="ECO:0007669"/>
    <property type="project" value="UniProtKB-SubCell"/>
</dbReference>
<dbReference type="InterPro" id="IPR018620">
    <property type="entry name" value="Ubiquitin3-bd_protein_But2_C"/>
</dbReference>
<dbReference type="PANTHER" id="PTHR39613">
    <property type="entry name" value="ANCHORED CELL WALL PROTEIN, PUTATIVE (AFU_ORTHOLOGUE AFUA_4G08960)-RELATED"/>
    <property type="match status" value="1"/>
</dbReference>
<dbReference type="PANTHER" id="PTHR39613:SF1">
    <property type="entry name" value="ANCHORED CELL WALL PROTEIN, PUTATIVE (AFU_ORTHOLOGUE AFUA_4G08960)-RELATED"/>
    <property type="match status" value="1"/>
</dbReference>
<dbReference type="Pfam" id="PF09792">
    <property type="entry name" value="But2"/>
    <property type="match status" value="1"/>
</dbReference>
<evidence type="ECO:0000255" key="1"/>
<evidence type="ECO:0000256" key="2">
    <source>
        <dbReference type="SAM" id="MobiDB-lite"/>
    </source>
</evidence>
<evidence type="ECO:0000269" key="3">
    <source>
    </source>
</evidence>
<evidence type="ECO:0000305" key="4"/>
<sequence>MKFSSIPIASTLLSLLVASSVTASPLRRRDDPLNGRQFGLLALHSGNEYVHLHGFYVGDSGSVYLDPADGTDDAATFTMSNGQLSVGNRYASVSANGEIVFKSDTNSTSSGFSVGEAISSGYSLKYNGTESAVACPSLVNNQVYQVFFGVGNGNPSCVGIAVLAVLPQPISSSSTYNSTTSSYHNSTSTPPPTITSTKASTVTSTEATTVTTTTAVTVTATETYTVTATNGGSTITSTGASTVTSTQPSTVTSTQRKNTATTTKTTTYVGPSPSASSVVAYTTKCIVVPVITTAASQSEAATPSPSAAVYPLFPHGIRLIDSTKPEANSGNVYSPVVFQKQNNHTNTIFTFDVPQVSGSCELNFHLDTSGFPITVEGVNGTGRFILFNLSSVANDSTVYSNRPNRIAEIGRFNCSSSGCDYATNVTCPDSYTAVSYEMMALTDDSYLSFFEEADPLEGLTLRV</sequence>
<organism>
    <name type="scientific">Schizosaccharomyces pombe (strain 972 / ATCC 24843)</name>
    <name type="common">Fission yeast</name>
    <dbReference type="NCBI Taxonomy" id="284812"/>
    <lineage>
        <taxon>Eukaryota</taxon>
        <taxon>Fungi</taxon>
        <taxon>Dikarya</taxon>
        <taxon>Ascomycota</taxon>
        <taxon>Taphrinomycotina</taxon>
        <taxon>Schizosaccharomycetes</taxon>
        <taxon>Schizosaccharomycetales</taxon>
        <taxon>Schizosaccharomycetaceae</taxon>
        <taxon>Schizosaccharomyces</taxon>
    </lineage>
</organism>
<feature type="signal peptide" evidence="1">
    <location>
        <begin position="1"/>
        <end position="23"/>
    </location>
</feature>
<feature type="chain" id="PRO_0000372624" description="Uncharacterized but2-like protein C27D7.11c">
    <location>
        <begin position="24"/>
        <end position="463"/>
    </location>
</feature>
<feature type="region of interest" description="Disordered" evidence="2">
    <location>
        <begin position="174"/>
        <end position="200"/>
    </location>
</feature>
<feature type="region of interest" description="Disordered" evidence="2">
    <location>
        <begin position="239"/>
        <end position="258"/>
    </location>
</feature>
<reference key="1">
    <citation type="journal article" date="2002" name="Nature">
        <title>The genome sequence of Schizosaccharomyces pombe.</title>
        <authorList>
            <person name="Wood V."/>
            <person name="Gwilliam R."/>
            <person name="Rajandream M.A."/>
            <person name="Lyne M.H."/>
            <person name="Lyne R."/>
            <person name="Stewart A."/>
            <person name="Sgouros J.G."/>
            <person name="Peat N."/>
            <person name="Hayles J."/>
            <person name="Baker S.G."/>
            <person name="Basham D."/>
            <person name="Bowman S."/>
            <person name="Brooks K."/>
            <person name="Brown D."/>
            <person name="Brown S."/>
            <person name="Chillingworth T."/>
            <person name="Churcher C.M."/>
            <person name="Collins M."/>
            <person name="Connor R."/>
            <person name="Cronin A."/>
            <person name="Davis P."/>
            <person name="Feltwell T."/>
            <person name="Fraser A."/>
            <person name="Gentles S."/>
            <person name="Goble A."/>
            <person name="Hamlin N."/>
            <person name="Harris D.E."/>
            <person name="Hidalgo J."/>
            <person name="Hodgson G."/>
            <person name="Holroyd S."/>
            <person name="Hornsby T."/>
            <person name="Howarth S."/>
            <person name="Huckle E.J."/>
            <person name="Hunt S."/>
            <person name="Jagels K."/>
            <person name="James K.D."/>
            <person name="Jones L."/>
            <person name="Jones M."/>
            <person name="Leather S."/>
            <person name="McDonald S."/>
            <person name="McLean J."/>
            <person name="Mooney P."/>
            <person name="Moule S."/>
            <person name="Mungall K.L."/>
            <person name="Murphy L.D."/>
            <person name="Niblett D."/>
            <person name="Odell C."/>
            <person name="Oliver K."/>
            <person name="O'Neil S."/>
            <person name="Pearson D."/>
            <person name="Quail M.A."/>
            <person name="Rabbinowitsch E."/>
            <person name="Rutherford K.M."/>
            <person name="Rutter S."/>
            <person name="Saunders D."/>
            <person name="Seeger K."/>
            <person name="Sharp S."/>
            <person name="Skelton J."/>
            <person name="Simmonds M.N."/>
            <person name="Squares R."/>
            <person name="Squares S."/>
            <person name="Stevens K."/>
            <person name="Taylor K."/>
            <person name="Taylor R.G."/>
            <person name="Tivey A."/>
            <person name="Walsh S.V."/>
            <person name="Warren T."/>
            <person name="Whitehead S."/>
            <person name="Woodward J.R."/>
            <person name="Volckaert G."/>
            <person name="Aert R."/>
            <person name="Robben J."/>
            <person name="Grymonprez B."/>
            <person name="Weltjens I."/>
            <person name="Vanstreels E."/>
            <person name="Rieger M."/>
            <person name="Schaefer M."/>
            <person name="Mueller-Auer S."/>
            <person name="Gabel C."/>
            <person name="Fuchs M."/>
            <person name="Duesterhoeft A."/>
            <person name="Fritzc C."/>
            <person name="Holzer E."/>
            <person name="Moestl D."/>
            <person name="Hilbert H."/>
            <person name="Borzym K."/>
            <person name="Langer I."/>
            <person name="Beck A."/>
            <person name="Lehrach H."/>
            <person name="Reinhardt R."/>
            <person name="Pohl T.M."/>
            <person name="Eger P."/>
            <person name="Zimmermann W."/>
            <person name="Wedler H."/>
            <person name="Wambutt R."/>
            <person name="Purnelle B."/>
            <person name="Goffeau A."/>
            <person name="Cadieu E."/>
            <person name="Dreano S."/>
            <person name="Gloux S."/>
            <person name="Lelaure V."/>
            <person name="Mottier S."/>
            <person name="Galibert F."/>
            <person name="Aves S.J."/>
            <person name="Xiang Z."/>
            <person name="Hunt C."/>
            <person name="Moore K."/>
            <person name="Hurst S.M."/>
            <person name="Lucas M."/>
            <person name="Rochet M."/>
            <person name="Gaillardin C."/>
            <person name="Tallada V.A."/>
            <person name="Garzon A."/>
            <person name="Thode G."/>
            <person name="Daga R.R."/>
            <person name="Cruzado L."/>
            <person name="Jimenez J."/>
            <person name="Sanchez M."/>
            <person name="del Rey F."/>
            <person name="Benito J."/>
            <person name="Dominguez A."/>
            <person name="Revuelta J.L."/>
            <person name="Moreno S."/>
            <person name="Armstrong J."/>
            <person name="Forsburg S.L."/>
            <person name="Cerutti L."/>
            <person name="Lowe T."/>
            <person name="McCombie W.R."/>
            <person name="Paulsen I."/>
            <person name="Potashkin J."/>
            <person name="Shpakovski G.V."/>
            <person name="Ussery D."/>
            <person name="Barrell B.G."/>
            <person name="Nurse P."/>
        </authorList>
    </citation>
    <scope>NUCLEOTIDE SEQUENCE [LARGE SCALE GENOMIC DNA]</scope>
    <source>
        <strain>972 / ATCC 24843</strain>
    </source>
</reference>
<reference key="2">
    <citation type="journal article" date="2006" name="Nat. Biotechnol.">
        <title>ORFeome cloning and global analysis of protein localization in the fission yeast Schizosaccharomyces pombe.</title>
        <authorList>
            <person name="Matsuyama A."/>
            <person name="Arai R."/>
            <person name="Yashiroda Y."/>
            <person name="Shirai A."/>
            <person name="Kamata A."/>
            <person name="Sekido S."/>
            <person name="Kobayashi Y."/>
            <person name="Hashimoto A."/>
            <person name="Hamamoto M."/>
            <person name="Hiraoka Y."/>
            <person name="Horinouchi S."/>
            <person name="Yoshida M."/>
        </authorList>
    </citation>
    <scope>SUBCELLULAR LOCATION [LARGE SCALE ANALYSIS]</scope>
</reference>
<name>YF8B_SCHPO</name>
<gene>
    <name type="ORF">SPAC27D7.11c</name>
</gene>
<accession>O42665</accession>
<protein>
    <recommendedName>
        <fullName>Uncharacterized but2-like protein C27D7.11c</fullName>
    </recommendedName>
</protein>